<proteinExistence type="evidence at transcript level"/>
<keyword id="KW-0007">Acetylation</keyword>
<keyword id="KW-0344">Guanine-nucleotide releasing factor</keyword>
<keyword id="KW-0488">Methylation</keyword>
<keyword id="KW-1185">Reference proteome</keyword>
<feature type="initiator methionine" description="Removed" evidence="1">
    <location>
        <position position="1"/>
    </location>
</feature>
<feature type="chain" id="PRO_0000315223" description="DENN domain-containing protein 11">
    <location>
        <begin position="2"/>
        <end position="455"/>
    </location>
</feature>
<feature type="domain" description="uDENN" evidence="2">
    <location>
        <begin position="15"/>
        <end position="187"/>
    </location>
</feature>
<feature type="domain" description="cDENN" evidence="2">
    <location>
        <begin position="214"/>
        <end position="362"/>
    </location>
</feature>
<feature type="domain" description="dDENN" evidence="2">
    <location>
        <begin position="364"/>
        <end position="455"/>
    </location>
</feature>
<feature type="region of interest" description="Disordered" evidence="3">
    <location>
        <begin position="21"/>
        <end position="61"/>
    </location>
</feature>
<feature type="compositionally biased region" description="Gly residues" evidence="3">
    <location>
        <begin position="32"/>
        <end position="41"/>
    </location>
</feature>
<feature type="modified residue" description="N-acetylvaline" evidence="1">
    <location>
        <position position="2"/>
    </location>
</feature>
<feature type="modified residue" description="Omega-N-methylarginine" evidence="1">
    <location>
        <position position="41"/>
    </location>
</feature>
<name>DEN11_RAT</name>
<evidence type="ECO:0000250" key="1">
    <source>
        <dbReference type="UniProtKB" id="A4D1U4"/>
    </source>
</evidence>
<evidence type="ECO:0000255" key="2">
    <source>
        <dbReference type="PROSITE-ProRule" id="PRU00304"/>
    </source>
</evidence>
<evidence type="ECO:0000256" key="3">
    <source>
        <dbReference type="SAM" id="MobiDB-lite"/>
    </source>
</evidence>
<evidence type="ECO:0000269" key="4">
    <source>
    </source>
</evidence>
<evidence type="ECO:0000303" key="5">
    <source>
    </source>
</evidence>
<evidence type="ECO:0000305" key="6"/>
<gene>
    <name type="primary">Dennd11</name>
    <name evidence="5" type="synonym">Lchn</name>
</gene>
<reference key="1">
    <citation type="journal article" date="2007" name="J. Neurochem.">
        <title>Isolation and characterization of LCHN: a novel factor induced by transient global ischemia in the adult rat hippocampus.</title>
        <authorList>
            <person name="Zhang G."/>
            <person name="Jung B.P."/>
            <person name="Ho W."/>
            <person name="Jugloff D.G.M."/>
            <person name="Cheung H.H."/>
            <person name="Gurd J.W."/>
            <person name="Wallace M.C."/>
            <person name="Eubanks J.H."/>
        </authorList>
    </citation>
    <scope>NUCLEOTIDE SEQUENCE [MRNA]</scope>
    <scope>FUNCTION</scope>
    <scope>INDUCTION</scope>
    <scope>TISSUE SPECIFICITY</scope>
    <source>
        <strain>Wistar</strain>
    </source>
</reference>
<sequence>MVEQGDAAPLLRWAEGPAVSVPQDPALQAGGWVRGGSGGGRVAAEAPRRREPEEPAPPEVLLQPGRLELGDVEEDQVVAVFVVTFDPRSGNMVEWCLPQDIDLEGVEFKSMASGSHKVQSDFIYFRKGPFFGLACFANMPVESELERGARMKSVGILSPSYTLLYRYMHFLENQVRHQLEMPGHYSHLAAFYEDKKGVLHAGPGRGGSLPPVYWLPSIHRYMYPEMKITHPAGCMSQFIKFFGEQILILWKFALLRKRILIFSPPPVGVVCYRVYCCCCLANVSLPGIGGTIPESKPFFYVNVADIESLEVEVSYVACTTEKIFEEKRELYDVYVDNQNVKTHHDHLQPLLKLNSADREKYRRLNEQRQMLLYSQEVEGDYSPCEEDLFVLFFLEQNNRIFQTLLEVSASQDKTLTAEHARGMGLDPQGDRSFLMDLLEAYGIDVMLVIDNPCCP</sequence>
<accession>Q0PGW2</accession>
<protein>
    <recommendedName>
        <fullName evidence="6">DENN domain-containing protein 11</fullName>
        <shortName>DENND11</shortName>
    </recommendedName>
    <alternativeName>
        <fullName evidence="5">Protein LCHN</fullName>
    </alternativeName>
</protein>
<organism>
    <name type="scientific">Rattus norvegicus</name>
    <name type="common">Rat</name>
    <dbReference type="NCBI Taxonomy" id="10116"/>
    <lineage>
        <taxon>Eukaryota</taxon>
        <taxon>Metazoa</taxon>
        <taxon>Chordata</taxon>
        <taxon>Craniata</taxon>
        <taxon>Vertebrata</taxon>
        <taxon>Euteleostomi</taxon>
        <taxon>Mammalia</taxon>
        <taxon>Eutheria</taxon>
        <taxon>Euarchontoglires</taxon>
        <taxon>Glires</taxon>
        <taxon>Rodentia</taxon>
        <taxon>Myomorpha</taxon>
        <taxon>Muroidea</taxon>
        <taxon>Muridae</taxon>
        <taxon>Murinae</taxon>
        <taxon>Rattus</taxon>
    </lineage>
</organism>
<dbReference type="EMBL" id="DQ836251">
    <property type="protein sequence ID" value="ABH04324.1"/>
    <property type="molecule type" value="mRNA"/>
</dbReference>
<dbReference type="RefSeq" id="NP_001038166.1">
    <property type="nucleotide sequence ID" value="NM_001044701.2"/>
</dbReference>
<dbReference type="RefSeq" id="XP_006236423.2">
    <property type="nucleotide sequence ID" value="XM_006236361.5"/>
</dbReference>
<dbReference type="FunCoup" id="Q0PGW2">
    <property type="interactions" value="311"/>
</dbReference>
<dbReference type="STRING" id="10116.ENSRNOP00000015921"/>
<dbReference type="PhosphoSitePlus" id="Q0PGW2"/>
<dbReference type="SwissPalm" id="Q0PGW2"/>
<dbReference type="jPOST" id="Q0PGW2"/>
<dbReference type="PaxDb" id="10116-ENSRNOP00000015921"/>
<dbReference type="Ensembl" id="ENSRNOT00000015921.7">
    <property type="protein sequence ID" value="ENSRNOP00000015921.4"/>
    <property type="gene ID" value="ENSRNOG00000011854.7"/>
</dbReference>
<dbReference type="GeneID" id="312270"/>
<dbReference type="KEGG" id="rno:312270"/>
<dbReference type="UCSC" id="RGD:1563986">
    <property type="organism name" value="rat"/>
</dbReference>
<dbReference type="AGR" id="RGD:1563986"/>
<dbReference type="CTD" id="57189"/>
<dbReference type="RGD" id="1563986">
    <property type="gene designation" value="Dennd11"/>
</dbReference>
<dbReference type="eggNOG" id="KOG4704">
    <property type="taxonomic scope" value="Eukaryota"/>
</dbReference>
<dbReference type="GeneTree" id="ENSGT00590000083189"/>
<dbReference type="HOGENOM" id="CLU_049607_0_0_1"/>
<dbReference type="InParanoid" id="Q0PGW2"/>
<dbReference type="OMA" id="KYMYPEM"/>
<dbReference type="OrthoDB" id="2152680at2759"/>
<dbReference type="PhylomeDB" id="Q0PGW2"/>
<dbReference type="TreeFam" id="TF329174"/>
<dbReference type="PRO" id="PR:Q0PGW2"/>
<dbReference type="Proteomes" id="UP000002494">
    <property type="component" value="Chromosome 4"/>
</dbReference>
<dbReference type="Bgee" id="ENSRNOG00000011854">
    <property type="expression patterns" value="Expressed in cerebellum and 18 other cell types or tissues"/>
</dbReference>
<dbReference type="GO" id="GO:0005737">
    <property type="term" value="C:cytoplasm"/>
    <property type="evidence" value="ECO:0000318"/>
    <property type="project" value="GO_Central"/>
</dbReference>
<dbReference type="GO" id="GO:0005085">
    <property type="term" value="F:guanyl-nucleotide exchange factor activity"/>
    <property type="evidence" value="ECO:0007669"/>
    <property type="project" value="UniProtKB-KW"/>
</dbReference>
<dbReference type="InterPro" id="IPR051731">
    <property type="entry name" value="DENND11/AVL9_GEFs"/>
</dbReference>
<dbReference type="InterPro" id="IPR018626">
    <property type="entry name" value="LCHN/Anr2"/>
</dbReference>
<dbReference type="InterPro" id="IPR037516">
    <property type="entry name" value="Tripartite_DENN"/>
</dbReference>
<dbReference type="PANTHER" id="PTHR31017:SF2">
    <property type="entry name" value="DENN DOMAIN-CONTAINING PROTEIN 11"/>
    <property type="match status" value="1"/>
</dbReference>
<dbReference type="PANTHER" id="PTHR31017">
    <property type="entry name" value="LATE SECRETORY PATHWAY PROTEIN AVL9-RELATED"/>
    <property type="match status" value="1"/>
</dbReference>
<dbReference type="Pfam" id="PF09804">
    <property type="entry name" value="DENND11"/>
    <property type="match status" value="1"/>
</dbReference>
<dbReference type="PROSITE" id="PS50211">
    <property type="entry name" value="DENN"/>
    <property type="match status" value="1"/>
</dbReference>
<comment type="function">
    <text evidence="4 6">Probable guanine nucleotide exchange factor (GEF). May promote the exchange of GDP to GTP, converting inactive GDP-bound small GTPases into their active GTP-bound form (Probable). May play a role in neuritogenesis, as well as in neuronal recovery and/or restructuring in the hippocampus following transient cerebral ischemia.</text>
</comment>
<comment type="tissue specificity">
    <text evidence="4">Expressed within the somatodendritic compartment of neurons, is also present on dendritic growth cones, but is not found in astrocytes.</text>
</comment>
<comment type="induction">
    <text evidence="4">By transient cerebral ischemia.</text>
</comment>
<comment type="similarity">
    <text evidence="6">Belongs to the DENND11 family.</text>
</comment>